<proteinExistence type="evidence at protein level"/>
<evidence type="ECO:0000255" key="1">
    <source>
        <dbReference type="HAMAP-Rule" id="MF_00834"/>
    </source>
</evidence>
<evidence type="ECO:0000305" key="2"/>
<evidence type="ECO:0007829" key="3">
    <source>
        <dbReference type="PDB" id="6ZHK"/>
    </source>
</evidence>
<protein>
    <recommendedName>
        <fullName evidence="1">Adenosylmethionine-8-amino-7-oxononanoate aminotransferase</fullName>
        <ecNumber evidence="1">2.6.1.62</ecNumber>
    </recommendedName>
    <alternativeName>
        <fullName evidence="1">7,8-diamino-pelargonic acid aminotransferase</fullName>
        <shortName evidence="1">DAPA AT</shortName>
        <shortName evidence="1">DAPA aminotransferase</shortName>
    </alternativeName>
    <alternativeName>
        <fullName evidence="1">7,8-diaminononanoate synthase</fullName>
        <shortName evidence="1">DANS</shortName>
    </alternativeName>
    <alternativeName>
        <fullName evidence="1">Diaminopelargonic acid synthase</fullName>
    </alternativeName>
</protein>
<keyword id="KW-0002">3D-structure</keyword>
<keyword id="KW-0032">Aminotransferase</keyword>
<keyword id="KW-0093">Biotin biosynthesis</keyword>
<keyword id="KW-0963">Cytoplasm</keyword>
<keyword id="KW-0663">Pyridoxal phosphate</keyword>
<keyword id="KW-1185">Reference proteome</keyword>
<keyword id="KW-0949">S-adenosyl-L-methionine</keyword>
<keyword id="KW-0808">Transferase</keyword>
<comment type="function">
    <text evidence="1">Catalyzes the transfer of the alpha-amino group from S-adenosyl-L-methionine (SAM) to 7-keto-8-aminopelargonic acid (KAPA) to form 7,8-diaminopelargonic acid (DAPA). It is the only aminotransferase known to utilize SAM as an amino donor.</text>
</comment>
<comment type="catalytic activity">
    <reaction evidence="1">
        <text>(8S)-8-amino-7-oxononanoate + S-adenosyl-L-methionine = S-adenosyl-4-methylsulfanyl-2-oxobutanoate + (7R,8S)-7,8-diammoniononanoate</text>
        <dbReference type="Rhea" id="RHEA:16861"/>
        <dbReference type="ChEBI" id="CHEBI:16490"/>
        <dbReference type="ChEBI" id="CHEBI:59789"/>
        <dbReference type="ChEBI" id="CHEBI:149468"/>
        <dbReference type="ChEBI" id="CHEBI:149469"/>
        <dbReference type="EC" id="2.6.1.62"/>
    </reaction>
</comment>
<comment type="cofactor">
    <cofactor evidence="1">
        <name>pyridoxal 5'-phosphate</name>
        <dbReference type="ChEBI" id="CHEBI:597326"/>
    </cofactor>
</comment>
<comment type="pathway">
    <text evidence="1">Cofactor biosynthesis; biotin biosynthesis; 7,8-diaminononanoate from 8-amino-7-oxononanoate (SAM route): step 1/1.</text>
</comment>
<comment type="subunit">
    <text evidence="1">Homodimer.</text>
</comment>
<comment type="subcellular location">
    <subcellularLocation>
        <location evidence="1">Cytoplasm</location>
    </subcellularLocation>
</comment>
<comment type="similarity">
    <text evidence="1">Belongs to the class-III pyridoxal-phosphate-dependent aminotransferase family. BioA subfamily.</text>
</comment>
<comment type="sequence caution" evidence="2">
    <conflict type="erroneous initiation">
        <sequence resource="EMBL-CDS" id="AAB99307"/>
    </conflict>
    <text>Extended N-terminus.</text>
</comment>
<reference key="1">
    <citation type="journal article" date="1996" name="Science">
        <title>Complete genome sequence of the methanogenic archaeon, Methanococcus jannaschii.</title>
        <authorList>
            <person name="Bult C.J."/>
            <person name="White O."/>
            <person name="Olsen G.J."/>
            <person name="Zhou L."/>
            <person name="Fleischmann R.D."/>
            <person name="Sutton G.G."/>
            <person name="Blake J.A."/>
            <person name="FitzGerald L.M."/>
            <person name="Clayton R.A."/>
            <person name="Gocayne J.D."/>
            <person name="Kerlavage A.R."/>
            <person name="Dougherty B.A."/>
            <person name="Tomb J.-F."/>
            <person name="Adams M.D."/>
            <person name="Reich C.I."/>
            <person name="Overbeek R."/>
            <person name="Kirkness E.F."/>
            <person name="Weinstock K.G."/>
            <person name="Merrick J.M."/>
            <person name="Glodek A."/>
            <person name="Scott J.L."/>
            <person name="Geoghagen N.S.M."/>
            <person name="Weidman J.F."/>
            <person name="Fuhrmann J.L."/>
            <person name="Nguyen D."/>
            <person name="Utterback T.R."/>
            <person name="Kelley J.M."/>
            <person name="Peterson J.D."/>
            <person name="Sadow P.W."/>
            <person name="Hanna M.C."/>
            <person name="Cotton M.D."/>
            <person name="Roberts K.M."/>
            <person name="Hurst M.A."/>
            <person name="Kaine B.P."/>
            <person name="Borodovsky M."/>
            <person name="Klenk H.-P."/>
            <person name="Fraser C.M."/>
            <person name="Smith H.O."/>
            <person name="Woese C.R."/>
            <person name="Venter J.C."/>
        </authorList>
    </citation>
    <scope>NUCLEOTIDE SEQUENCE [LARGE SCALE GENOMIC DNA]</scope>
    <source>
        <strain>ATCC 43067 / DSM 2661 / JAL-1 / JCM 10045 / NBRC 100440</strain>
    </source>
</reference>
<name>BIOA_METJA</name>
<dbReference type="EC" id="2.6.1.62" evidence="1"/>
<dbReference type="EMBL" id="L77117">
    <property type="protein sequence ID" value="AAB99307.1"/>
    <property type="status" value="ALT_INIT"/>
    <property type="molecule type" value="Genomic_DNA"/>
</dbReference>
<dbReference type="PIR" id="C64462">
    <property type="entry name" value="C64462"/>
</dbReference>
<dbReference type="RefSeq" id="WP_064496781.1">
    <property type="nucleotide sequence ID" value="NC_000909.1"/>
</dbReference>
<dbReference type="PDB" id="6ZHK">
    <property type="method" value="X-ray"/>
    <property type="resolution" value="1.80 A"/>
    <property type="chains" value="A/B=1-461"/>
</dbReference>
<dbReference type="PDBsum" id="6ZHK"/>
<dbReference type="SMR" id="Q58696"/>
<dbReference type="FunCoup" id="Q58696">
    <property type="interactions" value="145"/>
</dbReference>
<dbReference type="STRING" id="243232.MJ_1300"/>
<dbReference type="PaxDb" id="243232-MJ_1300"/>
<dbReference type="EnsemblBacteria" id="AAB99307">
    <property type="protein sequence ID" value="AAB99307"/>
    <property type="gene ID" value="MJ_1300"/>
</dbReference>
<dbReference type="GeneID" id="1452202"/>
<dbReference type="KEGG" id="mja:MJ_1300"/>
<dbReference type="eggNOG" id="arCOG00917">
    <property type="taxonomic scope" value="Archaea"/>
</dbReference>
<dbReference type="HOGENOM" id="CLU_016922_4_3_2"/>
<dbReference type="InParanoid" id="Q58696"/>
<dbReference type="OrthoDB" id="6534at2157"/>
<dbReference type="PhylomeDB" id="Q58696"/>
<dbReference type="UniPathway" id="UPA00078">
    <property type="reaction ID" value="UER00160"/>
</dbReference>
<dbReference type="Proteomes" id="UP000000805">
    <property type="component" value="Chromosome"/>
</dbReference>
<dbReference type="GO" id="GO:0005737">
    <property type="term" value="C:cytoplasm"/>
    <property type="evidence" value="ECO:0007669"/>
    <property type="project" value="UniProtKB-SubCell"/>
</dbReference>
<dbReference type="GO" id="GO:0004015">
    <property type="term" value="F:adenosylmethionine-8-amino-7-oxononanoate transaminase activity"/>
    <property type="evidence" value="ECO:0000318"/>
    <property type="project" value="GO_Central"/>
</dbReference>
<dbReference type="GO" id="GO:0030170">
    <property type="term" value="F:pyridoxal phosphate binding"/>
    <property type="evidence" value="ECO:0007669"/>
    <property type="project" value="UniProtKB-UniRule"/>
</dbReference>
<dbReference type="GO" id="GO:0009102">
    <property type="term" value="P:biotin biosynthetic process"/>
    <property type="evidence" value="ECO:0000318"/>
    <property type="project" value="GO_Central"/>
</dbReference>
<dbReference type="CDD" id="cd00610">
    <property type="entry name" value="OAT_like"/>
    <property type="match status" value="1"/>
</dbReference>
<dbReference type="FunFam" id="3.40.640.10:FF:000078">
    <property type="entry name" value="Adenosylmethionine-8-amino-7-oxononanoate aminotransferase"/>
    <property type="match status" value="1"/>
</dbReference>
<dbReference type="Gene3D" id="3.90.1150.10">
    <property type="entry name" value="Aspartate Aminotransferase, domain 1"/>
    <property type="match status" value="1"/>
</dbReference>
<dbReference type="Gene3D" id="3.40.640.10">
    <property type="entry name" value="Type I PLP-dependent aspartate aminotransferase-like (Major domain)"/>
    <property type="match status" value="1"/>
</dbReference>
<dbReference type="HAMAP" id="MF_00834">
    <property type="entry name" value="BioA"/>
    <property type="match status" value="1"/>
</dbReference>
<dbReference type="InterPro" id="IPR005814">
    <property type="entry name" value="Aminotrans_3"/>
</dbReference>
<dbReference type="InterPro" id="IPR049704">
    <property type="entry name" value="Aminotrans_3_PPA_site"/>
</dbReference>
<dbReference type="InterPro" id="IPR005815">
    <property type="entry name" value="BioA"/>
</dbReference>
<dbReference type="InterPro" id="IPR015424">
    <property type="entry name" value="PyrdxlP-dep_Trfase"/>
</dbReference>
<dbReference type="InterPro" id="IPR015421">
    <property type="entry name" value="PyrdxlP-dep_Trfase_major"/>
</dbReference>
<dbReference type="InterPro" id="IPR015422">
    <property type="entry name" value="PyrdxlP-dep_Trfase_small"/>
</dbReference>
<dbReference type="NCBIfam" id="TIGR00508">
    <property type="entry name" value="bioA"/>
    <property type="match status" value="1"/>
</dbReference>
<dbReference type="PANTHER" id="PTHR42684">
    <property type="entry name" value="ADENOSYLMETHIONINE-8-AMINO-7-OXONONANOATE AMINOTRANSFERASE"/>
    <property type="match status" value="1"/>
</dbReference>
<dbReference type="PANTHER" id="PTHR42684:SF17">
    <property type="entry name" value="ADENOSYLMETHIONINE-8-AMINO-7-OXONONANOATE AMINOTRANSFERASE"/>
    <property type="match status" value="1"/>
</dbReference>
<dbReference type="Pfam" id="PF00202">
    <property type="entry name" value="Aminotran_3"/>
    <property type="match status" value="1"/>
</dbReference>
<dbReference type="PIRSF" id="PIRSF000521">
    <property type="entry name" value="Transaminase_4ab_Lys_Orn"/>
    <property type="match status" value="1"/>
</dbReference>
<dbReference type="SUPFAM" id="SSF53383">
    <property type="entry name" value="PLP-dependent transferases"/>
    <property type="match status" value="1"/>
</dbReference>
<dbReference type="PROSITE" id="PS00600">
    <property type="entry name" value="AA_TRANSFER_CLASS_3"/>
    <property type="match status" value="1"/>
</dbReference>
<feature type="chain" id="PRO_0000120377" description="Adenosylmethionine-8-amino-7-oxononanoate aminotransferase">
    <location>
        <begin position="1"/>
        <end position="461"/>
    </location>
</feature>
<feature type="binding site" evidence="1">
    <location>
        <begin position="117"/>
        <end position="118"/>
    </location>
    <ligand>
        <name>pyridoxal 5'-phosphate</name>
        <dbReference type="ChEBI" id="CHEBI:597326"/>
    </ligand>
</feature>
<feature type="binding site" evidence="1">
    <location>
        <position position="150"/>
    </location>
    <ligand>
        <name>substrate</name>
    </ligand>
</feature>
<feature type="binding site" evidence="1">
    <location>
        <position position="263"/>
    </location>
    <ligand>
        <name>pyridoxal 5'-phosphate</name>
        <dbReference type="ChEBI" id="CHEBI:597326"/>
    </ligand>
</feature>
<feature type="binding site" evidence="1">
    <location>
        <position position="296"/>
    </location>
    <ligand>
        <name>substrate</name>
    </ligand>
</feature>
<feature type="binding site" evidence="1">
    <location>
        <position position="331"/>
    </location>
    <ligand>
        <name>substrate</name>
    </ligand>
</feature>
<feature type="binding site" evidence="1">
    <location>
        <position position="426"/>
    </location>
    <ligand>
        <name>substrate</name>
    </ligand>
</feature>
<feature type="site" description="Participates in the substrate recognition with KAPA and in a stacking interaction with the adenine ring of SAM" evidence="1">
    <location>
        <position position="20"/>
    </location>
</feature>
<feature type="modified residue" description="N6-(pyridoxal phosphate)lysine" evidence="1">
    <location>
        <position position="296"/>
    </location>
</feature>
<feature type="helix" evidence="3">
    <location>
        <begin position="5"/>
        <end position="15"/>
    </location>
</feature>
<feature type="helix" evidence="3">
    <location>
        <begin position="23"/>
        <end position="28"/>
    </location>
</feature>
<feature type="strand" evidence="3">
    <location>
        <begin position="33"/>
        <end position="38"/>
    </location>
</feature>
<feature type="strand" evidence="3">
    <location>
        <begin position="41"/>
        <end position="44"/>
    </location>
</feature>
<feature type="strand" evidence="3">
    <location>
        <begin position="49"/>
        <end position="52"/>
    </location>
</feature>
<feature type="helix" evidence="3">
    <location>
        <begin position="55"/>
        <end position="58"/>
    </location>
</feature>
<feature type="helix" evidence="3">
    <location>
        <begin position="67"/>
        <end position="77"/>
    </location>
</feature>
<feature type="helix" evidence="3">
    <location>
        <begin position="91"/>
        <end position="103"/>
    </location>
</feature>
<feature type="strand" evidence="3">
    <location>
        <begin position="110"/>
        <end position="116"/>
    </location>
</feature>
<feature type="helix" evidence="3">
    <location>
        <begin position="117"/>
        <end position="135"/>
    </location>
</feature>
<feature type="strand" evidence="3">
    <location>
        <begin position="142"/>
        <end position="146"/>
    </location>
</feature>
<feature type="helix" evidence="3">
    <location>
        <begin position="155"/>
        <end position="160"/>
    </location>
</feature>
<feature type="helix" evidence="3">
    <location>
        <begin position="164"/>
        <end position="167"/>
    </location>
</feature>
<feature type="helix" evidence="3">
    <location>
        <begin position="168"/>
        <end position="173"/>
    </location>
</feature>
<feature type="strand" evidence="3">
    <location>
        <begin position="178"/>
        <end position="180"/>
    </location>
</feature>
<feature type="helix" evidence="3">
    <location>
        <begin position="206"/>
        <end position="219"/>
    </location>
</feature>
<feature type="helix" evidence="3">
    <location>
        <begin position="220"/>
        <end position="222"/>
    </location>
</feature>
<feature type="strand" evidence="3">
    <location>
        <begin position="223"/>
        <end position="233"/>
    </location>
</feature>
<feature type="turn" evidence="3">
    <location>
        <begin position="234"/>
        <end position="237"/>
    </location>
</feature>
<feature type="strand" evidence="3">
    <location>
        <begin position="238"/>
        <end position="240"/>
    </location>
</feature>
<feature type="helix" evidence="3">
    <location>
        <begin position="245"/>
        <end position="256"/>
    </location>
</feature>
<feature type="strand" evidence="3">
    <location>
        <begin position="260"/>
        <end position="263"/>
    </location>
</feature>
<feature type="turn" evidence="3">
    <location>
        <begin position="265"/>
        <end position="272"/>
    </location>
</feature>
<feature type="strand" evidence="3">
    <location>
        <begin position="273"/>
        <end position="275"/>
    </location>
</feature>
<feature type="helix" evidence="3">
    <location>
        <begin position="281"/>
        <end position="286"/>
    </location>
</feature>
<feature type="strand" evidence="3">
    <location>
        <begin position="290"/>
        <end position="294"/>
    </location>
</feature>
<feature type="helix" evidence="3">
    <location>
        <begin position="296"/>
        <end position="299"/>
    </location>
</feature>
<feature type="strand" evidence="3">
    <location>
        <begin position="306"/>
        <end position="310"/>
    </location>
</feature>
<feature type="helix" evidence="3">
    <location>
        <begin position="312"/>
        <end position="316"/>
    </location>
</feature>
<feature type="helix" evidence="3">
    <location>
        <begin position="322"/>
        <end position="324"/>
    </location>
</feature>
<feature type="turn" evidence="3">
    <location>
        <begin position="333"/>
        <end position="336"/>
    </location>
</feature>
<feature type="helix" evidence="3">
    <location>
        <begin position="338"/>
        <end position="353"/>
    </location>
</feature>
<feature type="helix" evidence="3">
    <location>
        <begin position="356"/>
        <end position="359"/>
    </location>
</feature>
<feature type="helix" evidence="3">
    <location>
        <begin position="361"/>
        <end position="371"/>
    </location>
</feature>
<feature type="helix" evidence="3">
    <location>
        <begin position="372"/>
        <end position="376"/>
    </location>
</feature>
<feature type="strand" evidence="3">
    <location>
        <begin position="380"/>
        <end position="386"/>
    </location>
</feature>
<feature type="strand" evidence="3">
    <location>
        <begin position="389"/>
        <end position="394"/>
    </location>
</feature>
<feature type="turn" evidence="3">
    <location>
        <begin position="398"/>
        <end position="401"/>
    </location>
</feature>
<feature type="helix" evidence="3">
    <location>
        <begin position="406"/>
        <end position="408"/>
    </location>
</feature>
<feature type="helix" evidence="3">
    <location>
        <begin position="410"/>
        <end position="420"/>
    </location>
</feature>
<feature type="strand" evidence="3">
    <location>
        <begin position="431"/>
        <end position="434"/>
    </location>
</feature>
<feature type="helix" evidence="3">
    <location>
        <begin position="442"/>
        <end position="458"/>
    </location>
</feature>
<accession>Q58696</accession>
<sequence length="461" mass="52314">MNIDKNLLEKWDKEYIWHPYTQMKEYRESKNLIIERGEGNYLIDIYGNKYLDAVSSIWCNLFGHSRKEIIEAIKNQADKICHSTLLGCGNVPSILLAKKLVDITPKHLTKVFYSEDGAEAVEIAIKMAYQYYVLRGDKGRTKFISVKEGYHGDTVGAMSVGGSELFHGVFKPLLFKGYHANPPYCYRCKYHNFKDTDERNEKGCEMECLNEMISLIEKHAEEVFCVILEGGIMGSAGMIPYPDGYIEGVAKACKENDVIFILDEVATGFGRTGKMFFCDNEELKKLEKPDILCLGKGLTGGYLPLAATLTTDEIYNQFLGEFGESKQLYHGHTYTGNQLLCSAALATLEIFEKENVIENIQPKIKLFHKELRKLKELEHVGDVRGRGFMVGIELVKDKETKEPYPYGYKAGYRVAEKLLEKGIYMRPIGNVIILVPPLSITEKEIIYLCDALYEAIKEADL</sequence>
<organism>
    <name type="scientific">Methanocaldococcus jannaschii (strain ATCC 43067 / DSM 2661 / JAL-1 / JCM 10045 / NBRC 100440)</name>
    <name type="common">Methanococcus jannaschii</name>
    <dbReference type="NCBI Taxonomy" id="243232"/>
    <lineage>
        <taxon>Archaea</taxon>
        <taxon>Methanobacteriati</taxon>
        <taxon>Methanobacteriota</taxon>
        <taxon>Methanomada group</taxon>
        <taxon>Methanococci</taxon>
        <taxon>Methanococcales</taxon>
        <taxon>Methanocaldococcaceae</taxon>
        <taxon>Methanocaldococcus</taxon>
    </lineage>
</organism>
<gene>
    <name evidence="1" type="primary">bioA</name>
    <name type="ordered locus">MJ1300</name>
</gene>